<sequence length="334" mass="35913">MTTTVQNLKAEFGKVGVLFGGRSAEREVSLMSGKGVLAALQSKGVDAHAFDPAERSLAELAAEKFDRVFIALHGSYGEDGTLQGALEQLGIPYTGPGVMASAISMDKVMTKRVCLSHGVPTPRFTVLDAETTSAAQLQSVAAEFGLPLMLKAPHEGSTIGIAKVETAEGMQAGFDLCAKYEAVVLVEQFVKGRELTVPVIGSGRNARALPIVEIRAPQGNYDYEHKYFSNDTEYLCPAPFDEAFTKRVQALAVSAFNAVGCTGWSRVDFMVRASDNEPFLLEINTSPGMTSHSLVPMSAKVAGTGYEDLCIEILRSAKTELKPSSHMQLQEQER</sequence>
<proteinExistence type="inferred from homology"/>
<gene>
    <name evidence="2" type="primary">ddl</name>
    <name type="ordered locus">HEAR2809</name>
</gene>
<dbReference type="EC" id="6.3.2.4" evidence="2"/>
<dbReference type="EMBL" id="CU207211">
    <property type="protein sequence ID" value="CAL62923.1"/>
    <property type="molecule type" value="Genomic_DNA"/>
</dbReference>
<dbReference type="SMR" id="A4G8T6"/>
<dbReference type="STRING" id="204773.HEAR2809"/>
<dbReference type="KEGG" id="har:HEAR2809"/>
<dbReference type="eggNOG" id="COG1181">
    <property type="taxonomic scope" value="Bacteria"/>
</dbReference>
<dbReference type="HOGENOM" id="CLU_039268_1_2_4"/>
<dbReference type="OrthoDB" id="9813261at2"/>
<dbReference type="UniPathway" id="UPA00219"/>
<dbReference type="Proteomes" id="UP000006697">
    <property type="component" value="Chromosome"/>
</dbReference>
<dbReference type="GO" id="GO:0005737">
    <property type="term" value="C:cytoplasm"/>
    <property type="evidence" value="ECO:0007669"/>
    <property type="project" value="UniProtKB-SubCell"/>
</dbReference>
<dbReference type="GO" id="GO:0005524">
    <property type="term" value="F:ATP binding"/>
    <property type="evidence" value="ECO:0007669"/>
    <property type="project" value="UniProtKB-KW"/>
</dbReference>
<dbReference type="GO" id="GO:0008716">
    <property type="term" value="F:D-alanine-D-alanine ligase activity"/>
    <property type="evidence" value="ECO:0007669"/>
    <property type="project" value="UniProtKB-UniRule"/>
</dbReference>
<dbReference type="GO" id="GO:0046872">
    <property type="term" value="F:metal ion binding"/>
    <property type="evidence" value="ECO:0007669"/>
    <property type="project" value="UniProtKB-KW"/>
</dbReference>
<dbReference type="GO" id="GO:0071555">
    <property type="term" value="P:cell wall organization"/>
    <property type="evidence" value="ECO:0007669"/>
    <property type="project" value="UniProtKB-KW"/>
</dbReference>
<dbReference type="GO" id="GO:0009252">
    <property type="term" value="P:peptidoglycan biosynthetic process"/>
    <property type="evidence" value="ECO:0007669"/>
    <property type="project" value="UniProtKB-UniRule"/>
</dbReference>
<dbReference type="GO" id="GO:0008360">
    <property type="term" value="P:regulation of cell shape"/>
    <property type="evidence" value="ECO:0007669"/>
    <property type="project" value="UniProtKB-KW"/>
</dbReference>
<dbReference type="FunFam" id="3.30.470.20:FF:000008">
    <property type="entry name" value="D-alanine--D-alanine ligase"/>
    <property type="match status" value="1"/>
</dbReference>
<dbReference type="FunFam" id="3.40.50.20:FF:000013">
    <property type="entry name" value="D-alanine--D-alanine ligase"/>
    <property type="match status" value="1"/>
</dbReference>
<dbReference type="Gene3D" id="3.40.50.20">
    <property type="match status" value="1"/>
</dbReference>
<dbReference type="Gene3D" id="3.30.1490.20">
    <property type="entry name" value="ATP-grasp fold, A domain"/>
    <property type="match status" value="1"/>
</dbReference>
<dbReference type="Gene3D" id="3.30.470.20">
    <property type="entry name" value="ATP-grasp fold, B domain"/>
    <property type="match status" value="1"/>
</dbReference>
<dbReference type="HAMAP" id="MF_00047">
    <property type="entry name" value="Dala_Dala_lig"/>
    <property type="match status" value="1"/>
</dbReference>
<dbReference type="InterPro" id="IPR011761">
    <property type="entry name" value="ATP-grasp"/>
</dbReference>
<dbReference type="InterPro" id="IPR013815">
    <property type="entry name" value="ATP_grasp_subdomain_1"/>
</dbReference>
<dbReference type="InterPro" id="IPR000291">
    <property type="entry name" value="D-Ala_lig_Van_CS"/>
</dbReference>
<dbReference type="InterPro" id="IPR005905">
    <property type="entry name" value="D_ala_D_ala"/>
</dbReference>
<dbReference type="InterPro" id="IPR011095">
    <property type="entry name" value="Dala_Dala_lig_C"/>
</dbReference>
<dbReference type="InterPro" id="IPR011127">
    <property type="entry name" value="Dala_Dala_lig_N"/>
</dbReference>
<dbReference type="InterPro" id="IPR016185">
    <property type="entry name" value="PreATP-grasp_dom_sf"/>
</dbReference>
<dbReference type="NCBIfam" id="TIGR01205">
    <property type="entry name" value="D_ala_D_alaTIGR"/>
    <property type="match status" value="1"/>
</dbReference>
<dbReference type="NCBIfam" id="NF002378">
    <property type="entry name" value="PRK01372.1"/>
    <property type="match status" value="1"/>
</dbReference>
<dbReference type="PANTHER" id="PTHR23132">
    <property type="entry name" value="D-ALANINE--D-ALANINE LIGASE"/>
    <property type="match status" value="1"/>
</dbReference>
<dbReference type="PANTHER" id="PTHR23132:SF23">
    <property type="entry name" value="D-ALANINE--D-ALANINE LIGASE B"/>
    <property type="match status" value="1"/>
</dbReference>
<dbReference type="Pfam" id="PF07478">
    <property type="entry name" value="Dala_Dala_lig_C"/>
    <property type="match status" value="1"/>
</dbReference>
<dbReference type="Pfam" id="PF01820">
    <property type="entry name" value="Dala_Dala_lig_N"/>
    <property type="match status" value="1"/>
</dbReference>
<dbReference type="PIRSF" id="PIRSF039102">
    <property type="entry name" value="Ddl/VanB"/>
    <property type="match status" value="1"/>
</dbReference>
<dbReference type="SMART" id="SM01209">
    <property type="entry name" value="GARS_A"/>
    <property type="match status" value="1"/>
</dbReference>
<dbReference type="SUPFAM" id="SSF56059">
    <property type="entry name" value="Glutathione synthetase ATP-binding domain-like"/>
    <property type="match status" value="1"/>
</dbReference>
<dbReference type="SUPFAM" id="SSF52440">
    <property type="entry name" value="PreATP-grasp domain"/>
    <property type="match status" value="1"/>
</dbReference>
<dbReference type="PROSITE" id="PS50975">
    <property type="entry name" value="ATP_GRASP"/>
    <property type="match status" value="1"/>
</dbReference>
<dbReference type="PROSITE" id="PS00843">
    <property type="entry name" value="DALA_DALA_LIGASE_1"/>
    <property type="match status" value="1"/>
</dbReference>
<dbReference type="PROSITE" id="PS00844">
    <property type="entry name" value="DALA_DALA_LIGASE_2"/>
    <property type="match status" value="1"/>
</dbReference>
<evidence type="ECO:0000250" key="1"/>
<evidence type="ECO:0000255" key="2">
    <source>
        <dbReference type="HAMAP-Rule" id="MF_00047"/>
    </source>
</evidence>
<organism>
    <name type="scientific">Herminiimonas arsenicoxydans</name>
    <dbReference type="NCBI Taxonomy" id="204773"/>
    <lineage>
        <taxon>Bacteria</taxon>
        <taxon>Pseudomonadati</taxon>
        <taxon>Pseudomonadota</taxon>
        <taxon>Betaproteobacteria</taxon>
        <taxon>Burkholderiales</taxon>
        <taxon>Oxalobacteraceae</taxon>
        <taxon>Herminiimonas</taxon>
    </lineage>
</organism>
<accession>A4G8T6</accession>
<protein>
    <recommendedName>
        <fullName evidence="2">D-alanine--D-alanine ligase</fullName>
        <ecNumber evidence="2">6.3.2.4</ecNumber>
    </recommendedName>
    <alternativeName>
        <fullName evidence="2">D-Ala-D-Ala ligase</fullName>
    </alternativeName>
    <alternativeName>
        <fullName evidence="2">D-alanylalanine synthetase</fullName>
    </alternativeName>
</protein>
<keyword id="KW-0067">ATP-binding</keyword>
<keyword id="KW-0133">Cell shape</keyword>
<keyword id="KW-0961">Cell wall biogenesis/degradation</keyword>
<keyword id="KW-0963">Cytoplasm</keyword>
<keyword id="KW-0436">Ligase</keyword>
<keyword id="KW-0460">Magnesium</keyword>
<keyword id="KW-0464">Manganese</keyword>
<keyword id="KW-0479">Metal-binding</keyword>
<keyword id="KW-0547">Nucleotide-binding</keyword>
<keyword id="KW-0573">Peptidoglycan synthesis</keyword>
<keyword id="KW-1185">Reference proteome</keyword>
<reference key="1">
    <citation type="journal article" date="2007" name="PLoS Genet.">
        <title>A tale of two oxidation states: bacterial colonization of arsenic-rich environments.</title>
        <authorList>
            <person name="Muller D."/>
            <person name="Medigue C."/>
            <person name="Koechler S."/>
            <person name="Barbe V."/>
            <person name="Barakat M."/>
            <person name="Talla E."/>
            <person name="Bonnefoy V."/>
            <person name="Krin E."/>
            <person name="Arsene-Ploetze F."/>
            <person name="Carapito C."/>
            <person name="Chandler M."/>
            <person name="Cournoyer B."/>
            <person name="Cruveiller S."/>
            <person name="Dossat C."/>
            <person name="Duval S."/>
            <person name="Heymann M."/>
            <person name="Leize E."/>
            <person name="Lieutaud A."/>
            <person name="Lievremont D."/>
            <person name="Makita Y."/>
            <person name="Mangenot S."/>
            <person name="Nitschke W."/>
            <person name="Ortet P."/>
            <person name="Perdrial N."/>
            <person name="Schoepp B."/>
            <person name="Siguier P."/>
            <person name="Simeonova D.D."/>
            <person name="Rouy Z."/>
            <person name="Segurens B."/>
            <person name="Turlin E."/>
            <person name="Vallenet D."/>
            <person name="van Dorsselaer A."/>
            <person name="Weiss S."/>
            <person name="Weissenbach J."/>
            <person name="Lett M.-C."/>
            <person name="Danchin A."/>
            <person name="Bertin P.N."/>
        </authorList>
    </citation>
    <scope>NUCLEOTIDE SEQUENCE [LARGE SCALE GENOMIC DNA]</scope>
    <source>
        <strain>ULPAs1</strain>
    </source>
</reference>
<comment type="function">
    <text evidence="2">Cell wall formation.</text>
</comment>
<comment type="catalytic activity">
    <reaction evidence="2">
        <text>2 D-alanine + ATP = D-alanyl-D-alanine + ADP + phosphate + H(+)</text>
        <dbReference type="Rhea" id="RHEA:11224"/>
        <dbReference type="ChEBI" id="CHEBI:15378"/>
        <dbReference type="ChEBI" id="CHEBI:30616"/>
        <dbReference type="ChEBI" id="CHEBI:43474"/>
        <dbReference type="ChEBI" id="CHEBI:57416"/>
        <dbReference type="ChEBI" id="CHEBI:57822"/>
        <dbReference type="ChEBI" id="CHEBI:456216"/>
        <dbReference type="EC" id="6.3.2.4"/>
    </reaction>
</comment>
<comment type="cofactor">
    <cofactor evidence="1">
        <name>Mg(2+)</name>
        <dbReference type="ChEBI" id="CHEBI:18420"/>
    </cofactor>
    <cofactor evidence="1">
        <name>Mn(2+)</name>
        <dbReference type="ChEBI" id="CHEBI:29035"/>
    </cofactor>
    <text evidence="1">Binds 2 magnesium or manganese ions per subunit.</text>
</comment>
<comment type="pathway">
    <text evidence="2">Cell wall biogenesis; peptidoglycan biosynthesis.</text>
</comment>
<comment type="subcellular location">
    <subcellularLocation>
        <location evidence="2">Cytoplasm</location>
    </subcellularLocation>
</comment>
<comment type="similarity">
    <text evidence="2">Belongs to the D-alanine--D-alanine ligase family.</text>
</comment>
<feature type="chain" id="PRO_0000341110" description="D-alanine--D-alanine ligase">
    <location>
        <begin position="1"/>
        <end position="334"/>
    </location>
</feature>
<feature type="domain" description="ATP-grasp" evidence="2">
    <location>
        <begin position="111"/>
        <end position="315"/>
    </location>
</feature>
<feature type="binding site" evidence="2">
    <location>
        <begin position="141"/>
        <end position="196"/>
    </location>
    <ligand>
        <name>ATP</name>
        <dbReference type="ChEBI" id="CHEBI:30616"/>
    </ligand>
</feature>
<feature type="binding site" evidence="2">
    <location>
        <position position="268"/>
    </location>
    <ligand>
        <name>Mg(2+)</name>
        <dbReference type="ChEBI" id="CHEBI:18420"/>
        <label>1</label>
    </ligand>
</feature>
<feature type="binding site" evidence="2">
    <location>
        <position position="282"/>
    </location>
    <ligand>
        <name>Mg(2+)</name>
        <dbReference type="ChEBI" id="CHEBI:18420"/>
        <label>1</label>
    </ligand>
</feature>
<feature type="binding site" evidence="2">
    <location>
        <position position="282"/>
    </location>
    <ligand>
        <name>Mg(2+)</name>
        <dbReference type="ChEBI" id="CHEBI:18420"/>
        <label>2</label>
    </ligand>
</feature>
<feature type="binding site" evidence="2">
    <location>
        <position position="284"/>
    </location>
    <ligand>
        <name>Mg(2+)</name>
        <dbReference type="ChEBI" id="CHEBI:18420"/>
        <label>2</label>
    </ligand>
</feature>
<name>DDL_HERAR</name>